<gene>
    <name evidence="1" type="primary">uvrC</name>
    <name type="ordered locus">CHU_0175</name>
</gene>
<reference key="1">
    <citation type="journal article" date="2007" name="Appl. Environ. Microbiol.">
        <title>Genome sequence of the cellulolytic gliding bacterium Cytophaga hutchinsonii.</title>
        <authorList>
            <person name="Xie G."/>
            <person name="Bruce D.C."/>
            <person name="Challacombe J.F."/>
            <person name="Chertkov O."/>
            <person name="Detter J.C."/>
            <person name="Gilna P."/>
            <person name="Han C.S."/>
            <person name="Lucas S."/>
            <person name="Misra M."/>
            <person name="Myers G.L."/>
            <person name="Richardson P."/>
            <person name="Tapia R."/>
            <person name="Thayer N."/>
            <person name="Thompson L.S."/>
            <person name="Brettin T.S."/>
            <person name="Henrissat B."/>
            <person name="Wilson D.B."/>
            <person name="McBride M.J."/>
        </authorList>
    </citation>
    <scope>NUCLEOTIDE SEQUENCE [LARGE SCALE GENOMIC DNA]</scope>
    <source>
        <strain>ATCC 33406 / DSM 1761 / JCM 20678 / CIP 103989 / IAM 12607 / NBRC 15051 / NCIMB 9469 / D465</strain>
    </source>
</reference>
<name>UVRC_CYTH3</name>
<feature type="chain" id="PRO_0000264887" description="UvrABC system protein C">
    <location>
        <begin position="1"/>
        <end position="596"/>
    </location>
</feature>
<feature type="domain" description="GIY-YIG" evidence="1">
    <location>
        <begin position="16"/>
        <end position="95"/>
    </location>
</feature>
<feature type="domain" description="UVR" evidence="1">
    <location>
        <begin position="209"/>
        <end position="244"/>
    </location>
</feature>
<keyword id="KW-0963">Cytoplasm</keyword>
<keyword id="KW-0227">DNA damage</keyword>
<keyword id="KW-0228">DNA excision</keyword>
<keyword id="KW-0234">DNA repair</keyword>
<keyword id="KW-0267">Excision nuclease</keyword>
<keyword id="KW-1185">Reference proteome</keyword>
<keyword id="KW-0742">SOS response</keyword>
<organism>
    <name type="scientific">Cytophaga hutchinsonii (strain ATCC 33406 / DSM 1761 / CIP 103989 / NBRC 15051 / NCIMB 9469 / D465)</name>
    <dbReference type="NCBI Taxonomy" id="269798"/>
    <lineage>
        <taxon>Bacteria</taxon>
        <taxon>Pseudomonadati</taxon>
        <taxon>Bacteroidota</taxon>
        <taxon>Cytophagia</taxon>
        <taxon>Cytophagales</taxon>
        <taxon>Cytophagaceae</taxon>
        <taxon>Cytophaga</taxon>
    </lineage>
</organism>
<comment type="function">
    <text evidence="1">The UvrABC repair system catalyzes the recognition and processing of DNA lesions. UvrC both incises the 5' and 3' sides of the lesion. The N-terminal half is responsible for the 3' incision and the C-terminal half is responsible for the 5' incision.</text>
</comment>
<comment type="subunit">
    <text evidence="1">Interacts with UvrB in an incision complex.</text>
</comment>
<comment type="subcellular location">
    <subcellularLocation>
        <location evidence="1">Cytoplasm</location>
    </subcellularLocation>
</comment>
<comment type="similarity">
    <text evidence="1">Belongs to the UvrC family.</text>
</comment>
<sequence>MLEKEDIRSLLKELPSSPGVYRFYSIEKELIYVGKAKSLRKRVANYFTNKKNLDQKTRSMVRKIYHAEYTLVNSEYEALLLENNLIKENKPKYNVLLRDDKTYPFICLSSADFPTLTTTRKIDKKKGEYFGPYTSGRAMHSLVESLRKTFFIRTCDLNLTKQNIDAHKFKVCLEYHIGNCKGPCEGKQEKEDYDVSIIQVRNILKGNFSSVKKYYQEKMLSAAEDMQFEKAQFFKERYNSVLGLEKSSLIVNPDINNLEVYTIVKRLNRASVNFMSILHGSIIKARTIEMKAVLDETEEELLMHALFEIHEEGWDSTKEIICNIELPILSTYCKVSIPQRGDKKKLIDLSLKNAWHTLTRYDDQKKEKPEIRVLKTLQADLSLKELPAHIECFDNSNIQGTNPVAAMVCYKNGKPSKKDYRHFNIKTVEGPNDFASMYEIVYRRYKRMGEEGLPFPTLIIIDGGKGQLSFACQALKDLNIYGQIPIVSIAKNLEELFFPGDNDPLYLDKKSESLKLIQQIRDETHRFAITFHRQKRSKDALLKTEFENLVGIGPGTVKKLLTHFKTVKRIKEASIEQLTPVIGNSKATILFQQLNK</sequence>
<accession>Q11YP9</accession>
<protein>
    <recommendedName>
        <fullName evidence="1">UvrABC system protein C</fullName>
        <shortName evidence="1">Protein UvrC</shortName>
    </recommendedName>
    <alternativeName>
        <fullName evidence="1">Excinuclease ABC subunit C</fullName>
    </alternativeName>
</protein>
<evidence type="ECO:0000255" key="1">
    <source>
        <dbReference type="HAMAP-Rule" id="MF_00203"/>
    </source>
</evidence>
<dbReference type="EMBL" id="CP000383">
    <property type="protein sequence ID" value="ABG57467.1"/>
    <property type="molecule type" value="Genomic_DNA"/>
</dbReference>
<dbReference type="RefSeq" id="WP_011583583.1">
    <property type="nucleotide sequence ID" value="NC_008255.1"/>
</dbReference>
<dbReference type="SMR" id="Q11YP9"/>
<dbReference type="STRING" id="269798.CHU_0175"/>
<dbReference type="KEGG" id="chu:CHU_0175"/>
<dbReference type="eggNOG" id="COG0322">
    <property type="taxonomic scope" value="Bacteria"/>
</dbReference>
<dbReference type="HOGENOM" id="CLU_014841_3_2_10"/>
<dbReference type="OrthoDB" id="9804933at2"/>
<dbReference type="Proteomes" id="UP000001822">
    <property type="component" value="Chromosome"/>
</dbReference>
<dbReference type="GO" id="GO:0005737">
    <property type="term" value="C:cytoplasm"/>
    <property type="evidence" value="ECO:0007669"/>
    <property type="project" value="UniProtKB-SubCell"/>
</dbReference>
<dbReference type="GO" id="GO:0009380">
    <property type="term" value="C:excinuclease repair complex"/>
    <property type="evidence" value="ECO:0007669"/>
    <property type="project" value="InterPro"/>
</dbReference>
<dbReference type="GO" id="GO:0003677">
    <property type="term" value="F:DNA binding"/>
    <property type="evidence" value="ECO:0007669"/>
    <property type="project" value="UniProtKB-UniRule"/>
</dbReference>
<dbReference type="GO" id="GO:0009381">
    <property type="term" value="F:excinuclease ABC activity"/>
    <property type="evidence" value="ECO:0007669"/>
    <property type="project" value="UniProtKB-UniRule"/>
</dbReference>
<dbReference type="GO" id="GO:0006289">
    <property type="term" value="P:nucleotide-excision repair"/>
    <property type="evidence" value="ECO:0007669"/>
    <property type="project" value="UniProtKB-UniRule"/>
</dbReference>
<dbReference type="GO" id="GO:0009432">
    <property type="term" value="P:SOS response"/>
    <property type="evidence" value="ECO:0007669"/>
    <property type="project" value="UniProtKB-UniRule"/>
</dbReference>
<dbReference type="CDD" id="cd10434">
    <property type="entry name" value="GIY-YIG_UvrC_Cho"/>
    <property type="match status" value="1"/>
</dbReference>
<dbReference type="FunFam" id="3.40.1440.10:FF:000001">
    <property type="entry name" value="UvrABC system protein C"/>
    <property type="match status" value="1"/>
</dbReference>
<dbReference type="Gene3D" id="1.10.150.20">
    <property type="entry name" value="5' to 3' exonuclease, C-terminal subdomain"/>
    <property type="match status" value="1"/>
</dbReference>
<dbReference type="Gene3D" id="3.40.1440.10">
    <property type="entry name" value="GIY-YIG endonuclease"/>
    <property type="match status" value="1"/>
</dbReference>
<dbReference type="Gene3D" id="3.30.420.340">
    <property type="entry name" value="UvrC, RNAse H endonuclease domain"/>
    <property type="match status" value="1"/>
</dbReference>
<dbReference type="HAMAP" id="MF_00203">
    <property type="entry name" value="UvrC"/>
    <property type="match status" value="1"/>
</dbReference>
<dbReference type="InterPro" id="IPR000305">
    <property type="entry name" value="GIY-YIG_endonuc"/>
</dbReference>
<dbReference type="InterPro" id="IPR035901">
    <property type="entry name" value="GIY-YIG_endonuc_sf"/>
</dbReference>
<dbReference type="InterPro" id="IPR047296">
    <property type="entry name" value="GIY-YIG_UvrC_Cho"/>
</dbReference>
<dbReference type="InterPro" id="IPR010994">
    <property type="entry name" value="RuvA_2-like"/>
</dbReference>
<dbReference type="InterPro" id="IPR036876">
    <property type="entry name" value="UVR_dom_sf"/>
</dbReference>
<dbReference type="InterPro" id="IPR050066">
    <property type="entry name" value="UvrABC_protein_C"/>
</dbReference>
<dbReference type="InterPro" id="IPR004791">
    <property type="entry name" value="UvrC"/>
</dbReference>
<dbReference type="InterPro" id="IPR001162">
    <property type="entry name" value="UvrC_RNase_H_dom"/>
</dbReference>
<dbReference type="InterPro" id="IPR038476">
    <property type="entry name" value="UvrC_RNase_H_dom_sf"/>
</dbReference>
<dbReference type="NCBIfam" id="TIGR00194">
    <property type="entry name" value="uvrC"/>
    <property type="match status" value="1"/>
</dbReference>
<dbReference type="PANTHER" id="PTHR30562:SF1">
    <property type="entry name" value="UVRABC SYSTEM PROTEIN C"/>
    <property type="match status" value="1"/>
</dbReference>
<dbReference type="PANTHER" id="PTHR30562">
    <property type="entry name" value="UVRC/OXIDOREDUCTASE"/>
    <property type="match status" value="1"/>
</dbReference>
<dbReference type="Pfam" id="PF01541">
    <property type="entry name" value="GIY-YIG"/>
    <property type="match status" value="1"/>
</dbReference>
<dbReference type="Pfam" id="PF22920">
    <property type="entry name" value="UvrC_RNaseH"/>
    <property type="match status" value="1"/>
</dbReference>
<dbReference type="Pfam" id="PF08459">
    <property type="entry name" value="UvrC_RNaseH_dom"/>
    <property type="match status" value="1"/>
</dbReference>
<dbReference type="SMART" id="SM00465">
    <property type="entry name" value="GIYc"/>
    <property type="match status" value="1"/>
</dbReference>
<dbReference type="SUPFAM" id="SSF46600">
    <property type="entry name" value="C-terminal UvrC-binding domain of UvrB"/>
    <property type="match status" value="1"/>
</dbReference>
<dbReference type="SUPFAM" id="SSF82771">
    <property type="entry name" value="GIY-YIG endonuclease"/>
    <property type="match status" value="1"/>
</dbReference>
<dbReference type="SUPFAM" id="SSF47781">
    <property type="entry name" value="RuvA domain 2-like"/>
    <property type="match status" value="1"/>
</dbReference>
<dbReference type="PROSITE" id="PS50164">
    <property type="entry name" value="GIY_YIG"/>
    <property type="match status" value="1"/>
</dbReference>
<dbReference type="PROSITE" id="PS50165">
    <property type="entry name" value="UVRC"/>
    <property type="match status" value="1"/>
</dbReference>
<proteinExistence type="inferred from homology"/>